<organism>
    <name type="scientific">Lactobacillus johnsonii (strain CNCM I-12250 / La1 / NCC 533)</name>
    <dbReference type="NCBI Taxonomy" id="257314"/>
    <lineage>
        <taxon>Bacteria</taxon>
        <taxon>Bacillati</taxon>
        <taxon>Bacillota</taxon>
        <taxon>Bacilli</taxon>
        <taxon>Lactobacillales</taxon>
        <taxon>Lactobacillaceae</taxon>
        <taxon>Lactobacillus</taxon>
    </lineage>
</organism>
<evidence type="ECO:0000255" key="1">
    <source>
        <dbReference type="HAMAP-Rule" id="MF_00011"/>
    </source>
</evidence>
<sequence length="429" mass="47441">MTAIAVVGSQWGDEGKGKITDFLSKEAAMAVRSNGGNNAGHTIEIGDKTFKMRLIPSGIFAAKKGAVIGNGVVINPEVMFGELDNLEKEGIDISGLKISNRAHIIMPYHILQDTYQEEAKGDKKIGTTKNGIGPCYMDKASRTGIRVCDLLERDTFEEKLRTNLAEKNALFTKVYGKPELKFEDIFEKYLEYGQKMKKYVTDTSVVVNDALDNDEKVLFEGAQGVMLDIDEGTYPYVTSSNTISGGIASGIGMGANRLDTVIGVCKAYTTRVGEGPFPTELLDEVGDRIRETAHEYGTVTGRPRRVGWFDSVALRHAKRVAGINALSLNLLDVFSGFDKIKIATAYELDGEKIDYYPASLKELYRCKPVYEELPAWEEDITNVKTWEDLPENAKKFLNRVSELVGVPLVTVSVGPDREQTIVLKNPWEK</sequence>
<accession>Q74KY3</accession>
<feature type="chain" id="PRO_0000224287" description="Adenylosuccinate synthetase">
    <location>
        <begin position="1"/>
        <end position="429"/>
    </location>
</feature>
<feature type="active site" description="Proton acceptor" evidence="1">
    <location>
        <position position="13"/>
    </location>
</feature>
<feature type="active site" description="Proton donor" evidence="1">
    <location>
        <position position="41"/>
    </location>
</feature>
<feature type="binding site" evidence="1">
    <location>
        <begin position="12"/>
        <end position="18"/>
    </location>
    <ligand>
        <name>GTP</name>
        <dbReference type="ChEBI" id="CHEBI:37565"/>
    </ligand>
</feature>
<feature type="binding site" description="in other chain" evidence="1">
    <location>
        <begin position="13"/>
        <end position="16"/>
    </location>
    <ligand>
        <name>IMP</name>
        <dbReference type="ChEBI" id="CHEBI:58053"/>
        <note>ligand shared between dimeric partners</note>
    </ligand>
</feature>
<feature type="binding site" evidence="1">
    <location>
        <position position="13"/>
    </location>
    <ligand>
        <name>Mg(2+)</name>
        <dbReference type="ChEBI" id="CHEBI:18420"/>
    </ligand>
</feature>
<feature type="binding site" description="in other chain" evidence="1">
    <location>
        <begin position="38"/>
        <end position="41"/>
    </location>
    <ligand>
        <name>IMP</name>
        <dbReference type="ChEBI" id="CHEBI:58053"/>
        <note>ligand shared between dimeric partners</note>
    </ligand>
</feature>
<feature type="binding site" evidence="1">
    <location>
        <begin position="40"/>
        <end position="42"/>
    </location>
    <ligand>
        <name>GTP</name>
        <dbReference type="ChEBI" id="CHEBI:37565"/>
    </ligand>
</feature>
<feature type="binding site" evidence="1">
    <location>
        <position position="40"/>
    </location>
    <ligand>
        <name>Mg(2+)</name>
        <dbReference type="ChEBI" id="CHEBI:18420"/>
    </ligand>
</feature>
<feature type="binding site" description="in other chain" evidence="1">
    <location>
        <position position="128"/>
    </location>
    <ligand>
        <name>IMP</name>
        <dbReference type="ChEBI" id="CHEBI:58053"/>
        <note>ligand shared between dimeric partners</note>
    </ligand>
</feature>
<feature type="binding site" evidence="1">
    <location>
        <position position="142"/>
    </location>
    <ligand>
        <name>IMP</name>
        <dbReference type="ChEBI" id="CHEBI:58053"/>
        <note>ligand shared between dimeric partners</note>
    </ligand>
</feature>
<feature type="binding site" description="in other chain" evidence="1">
    <location>
        <position position="223"/>
    </location>
    <ligand>
        <name>IMP</name>
        <dbReference type="ChEBI" id="CHEBI:58053"/>
        <note>ligand shared between dimeric partners</note>
    </ligand>
</feature>
<feature type="binding site" description="in other chain" evidence="1">
    <location>
        <position position="238"/>
    </location>
    <ligand>
        <name>IMP</name>
        <dbReference type="ChEBI" id="CHEBI:58053"/>
        <note>ligand shared between dimeric partners</note>
    </ligand>
</feature>
<feature type="binding site" evidence="1">
    <location>
        <begin position="298"/>
        <end position="304"/>
    </location>
    <ligand>
        <name>substrate</name>
    </ligand>
</feature>
<feature type="binding site" description="in other chain" evidence="1">
    <location>
        <position position="302"/>
    </location>
    <ligand>
        <name>IMP</name>
        <dbReference type="ChEBI" id="CHEBI:58053"/>
        <note>ligand shared between dimeric partners</note>
    </ligand>
</feature>
<feature type="binding site" evidence="1">
    <location>
        <position position="304"/>
    </location>
    <ligand>
        <name>GTP</name>
        <dbReference type="ChEBI" id="CHEBI:37565"/>
    </ligand>
</feature>
<feature type="binding site" evidence="1">
    <location>
        <begin position="330"/>
        <end position="332"/>
    </location>
    <ligand>
        <name>GTP</name>
        <dbReference type="ChEBI" id="CHEBI:37565"/>
    </ligand>
</feature>
<feature type="binding site" evidence="1">
    <location>
        <begin position="412"/>
        <end position="414"/>
    </location>
    <ligand>
        <name>GTP</name>
        <dbReference type="ChEBI" id="CHEBI:37565"/>
    </ligand>
</feature>
<gene>
    <name evidence="1" type="primary">purA</name>
    <name type="ordered locus">LJ_0442</name>
</gene>
<name>PURA_LACJO</name>
<proteinExistence type="inferred from homology"/>
<comment type="function">
    <text evidence="1">Plays an important role in the de novo pathway of purine nucleotide biosynthesis. Catalyzes the first committed step in the biosynthesis of AMP from IMP.</text>
</comment>
<comment type="catalytic activity">
    <reaction evidence="1">
        <text>IMP + L-aspartate + GTP = N(6)-(1,2-dicarboxyethyl)-AMP + GDP + phosphate + 2 H(+)</text>
        <dbReference type="Rhea" id="RHEA:15753"/>
        <dbReference type="ChEBI" id="CHEBI:15378"/>
        <dbReference type="ChEBI" id="CHEBI:29991"/>
        <dbReference type="ChEBI" id="CHEBI:37565"/>
        <dbReference type="ChEBI" id="CHEBI:43474"/>
        <dbReference type="ChEBI" id="CHEBI:57567"/>
        <dbReference type="ChEBI" id="CHEBI:58053"/>
        <dbReference type="ChEBI" id="CHEBI:58189"/>
        <dbReference type="EC" id="6.3.4.4"/>
    </reaction>
</comment>
<comment type="cofactor">
    <cofactor evidence="1">
        <name>Mg(2+)</name>
        <dbReference type="ChEBI" id="CHEBI:18420"/>
    </cofactor>
    <text evidence="1">Binds 1 Mg(2+) ion per subunit.</text>
</comment>
<comment type="pathway">
    <text evidence="1">Purine metabolism; AMP biosynthesis via de novo pathway; AMP from IMP: step 1/2.</text>
</comment>
<comment type="subunit">
    <text evidence="1">Homodimer.</text>
</comment>
<comment type="subcellular location">
    <subcellularLocation>
        <location evidence="1">Cytoplasm</location>
    </subcellularLocation>
</comment>
<comment type="similarity">
    <text evidence="1">Belongs to the adenylosuccinate synthetase family.</text>
</comment>
<reference key="1">
    <citation type="journal article" date="2004" name="Proc. Natl. Acad. Sci. U.S.A.">
        <title>The genome sequence of the probiotic intestinal bacterium Lactobacillus johnsonii NCC 533.</title>
        <authorList>
            <person name="Pridmore R.D."/>
            <person name="Berger B."/>
            <person name="Desiere F."/>
            <person name="Vilanova D."/>
            <person name="Barretto C."/>
            <person name="Pittet A.-C."/>
            <person name="Zwahlen M.-C."/>
            <person name="Rouvet M."/>
            <person name="Altermann E."/>
            <person name="Barrangou R."/>
            <person name="Mollet B."/>
            <person name="Mercenier A."/>
            <person name="Klaenhammer T."/>
            <person name="Arigoni F."/>
            <person name="Schell M.A."/>
        </authorList>
    </citation>
    <scope>NUCLEOTIDE SEQUENCE [LARGE SCALE GENOMIC DNA]</scope>
    <source>
        <strain>CNCM I-1225 / La1 / NCC 533</strain>
    </source>
</reference>
<keyword id="KW-0963">Cytoplasm</keyword>
<keyword id="KW-0342">GTP-binding</keyword>
<keyword id="KW-0436">Ligase</keyword>
<keyword id="KW-0460">Magnesium</keyword>
<keyword id="KW-0479">Metal-binding</keyword>
<keyword id="KW-0547">Nucleotide-binding</keyword>
<keyword id="KW-0658">Purine biosynthesis</keyword>
<dbReference type="EC" id="6.3.4.4" evidence="1"/>
<dbReference type="EMBL" id="AE017198">
    <property type="protein sequence ID" value="AAS08433.1"/>
    <property type="molecule type" value="Genomic_DNA"/>
</dbReference>
<dbReference type="RefSeq" id="WP_011161583.1">
    <property type="nucleotide sequence ID" value="NC_005362.1"/>
</dbReference>
<dbReference type="SMR" id="Q74KY3"/>
<dbReference type="KEGG" id="ljo:LJ_0442"/>
<dbReference type="eggNOG" id="COG0104">
    <property type="taxonomic scope" value="Bacteria"/>
</dbReference>
<dbReference type="HOGENOM" id="CLU_029848_0_0_9"/>
<dbReference type="UniPathway" id="UPA00075">
    <property type="reaction ID" value="UER00335"/>
</dbReference>
<dbReference type="Proteomes" id="UP000000581">
    <property type="component" value="Chromosome"/>
</dbReference>
<dbReference type="GO" id="GO:0005737">
    <property type="term" value="C:cytoplasm"/>
    <property type="evidence" value="ECO:0007669"/>
    <property type="project" value="UniProtKB-SubCell"/>
</dbReference>
<dbReference type="GO" id="GO:0004019">
    <property type="term" value="F:adenylosuccinate synthase activity"/>
    <property type="evidence" value="ECO:0007669"/>
    <property type="project" value="UniProtKB-UniRule"/>
</dbReference>
<dbReference type="GO" id="GO:0005525">
    <property type="term" value="F:GTP binding"/>
    <property type="evidence" value="ECO:0007669"/>
    <property type="project" value="UniProtKB-UniRule"/>
</dbReference>
<dbReference type="GO" id="GO:0000287">
    <property type="term" value="F:magnesium ion binding"/>
    <property type="evidence" value="ECO:0007669"/>
    <property type="project" value="UniProtKB-UniRule"/>
</dbReference>
<dbReference type="GO" id="GO:0044208">
    <property type="term" value="P:'de novo' AMP biosynthetic process"/>
    <property type="evidence" value="ECO:0007669"/>
    <property type="project" value="UniProtKB-UniRule"/>
</dbReference>
<dbReference type="GO" id="GO:0046040">
    <property type="term" value="P:IMP metabolic process"/>
    <property type="evidence" value="ECO:0007669"/>
    <property type="project" value="TreeGrafter"/>
</dbReference>
<dbReference type="CDD" id="cd03108">
    <property type="entry name" value="AdSS"/>
    <property type="match status" value="1"/>
</dbReference>
<dbReference type="FunFam" id="1.10.300.10:FF:000001">
    <property type="entry name" value="Adenylosuccinate synthetase"/>
    <property type="match status" value="1"/>
</dbReference>
<dbReference type="FunFam" id="3.90.170.10:FF:000001">
    <property type="entry name" value="Adenylosuccinate synthetase"/>
    <property type="match status" value="1"/>
</dbReference>
<dbReference type="Gene3D" id="3.40.440.10">
    <property type="entry name" value="Adenylosuccinate Synthetase, subunit A, domain 1"/>
    <property type="match status" value="1"/>
</dbReference>
<dbReference type="Gene3D" id="1.10.300.10">
    <property type="entry name" value="Adenylosuccinate Synthetase, subunit A, domain 2"/>
    <property type="match status" value="1"/>
</dbReference>
<dbReference type="Gene3D" id="3.90.170.10">
    <property type="entry name" value="Adenylosuccinate Synthetase, subunit A, domain 3"/>
    <property type="match status" value="1"/>
</dbReference>
<dbReference type="HAMAP" id="MF_00011">
    <property type="entry name" value="Adenylosucc_synth"/>
    <property type="match status" value="1"/>
</dbReference>
<dbReference type="InterPro" id="IPR018220">
    <property type="entry name" value="Adenylosuccin_syn_GTP-bd"/>
</dbReference>
<dbReference type="InterPro" id="IPR033128">
    <property type="entry name" value="Adenylosuccin_syn_Lys_AS"/>
</dbReference>
<dbReference type="InterPro" id="IPR042109">
    <property type="entry name" value="Adenylosuccinate_synth_dom1"/>
</dbReference>
<dbReference type="InterPro" id="IPR042110">
    <property type="entry name" value="Adenylosuccinate_synth_dom2"/>
</dbReference>
<dbReference type="InterPro" id="IPR042111">
    <property type="entry name" value="Adenylosuccinate_synth_dom3"/>
</dbReference>
<dbReference type="InterPro" id="IPR001114">
    <property type="entry name" value="Adenylosuccinate_synthetase"/>
</dbReference>
<dbReference type="InterPro" id="IPR027417">
    <property type="entry name" value="P-loop_NTPase"/>
</dbReference>
<dbReference type="NCBIfam" id="NF002223">
    <property type="entry name" value="PRK01117.1"/>
    <property type="match status" value="1"/>
</dbReference>
<dbReference type="NCBIfam" id="TIGR00184">
    <property type="entry name" value="purA"/>
    <property type="match status" value="1"/>
</dbReference>
<dbReference type="PANTHER" id="PTHR11846">
    <property type="entry name" value="ADENYLOSUCCINATE SYNTHETASE"/>
    <property type="match status" value="1"/>
</dbReference>
<dbReference type="PANTHER" id="PTHR11846:SF0">
    <property type="entry name" value="ADENYLOSUCCINATE SYNTHETASE"/>
    <property type="match status" value="1"/>
</dbReference>
<dbReference type="Pfam" id="PF00709">
    <property type="entry name" value="Adenylsucc_synt"/>
    <property type="match status" value="1"/>
</dbReference>
<dbReference type="SMART" id="SM00788">
    <property type="entry name" value="Adenylsucc_synt"/>
    <property type="match status" value="1"/>
</dbReference>
<dbReference type="SUPFAM" id="SSF52540">
    <property type="entry name" value="P-loop containing nucleoside triphosphate hydrolases"/>
    <property type="match status" value="1"/>
</dbReference>
<dbReference type="PROSITE" id="PS01266">
    <property type="entry name" value="ADENYLOSUCCIN_SYN_1"/>
    <property type="match status" value="1"/>
</dbReference>
<dbReference type="PROSITE" id="PS00513">
    <property type="entry name" value="ADENYLOSUCCIN_SYN_2"/>
    <property type="match status" value="1"/>
</dbReference>
<protein>
    <recommendedName>
        <fullName evidence="1">Adenylosuccinate synthetase</fullName>
        <shortName evidence="1">AMPSase</shortName>
        <shortName evidence="1">AdSS</shortName>
        <ecNumber evidence="1">6.3.4.4</ecNumber>
    </recommendedName>
    <alternativeName>
        <fullName evidence="1">IMP--aspartate ligase</fullName>
    </alternativeName>
</protein>